<feature type="chain" id="PRO_0000160846" description="L-threonine 3-dehydrogenase">
    <location>
        <begin position="1"/>
        <end position="342"/>
    </location>
</feature>
<feature type="active site" description="Charge relay system" evidence="1">
    <location>
        <position position="41"/>
    </location>
</feature>
<feature type="active site" description="Charge relay system" evidence="1">
    <location>
        <position position="44"/>
    </location>
</feature>
<feature type="binding site" evidence="1">
    <location>
        <position position="39"/>
    </location>
    <ligand>
        <name>Zn(2+)</name>
        <dbReference type="ChEBI" id="CHEBI:29105"/>
        <label>1</label>
        <note>catalytic</note>
    </ligand>
</feature>
<feature type="binding site" evidence="1">
    <location>
        <position position="64"/>
    </location>
    <ligand>
        <name>Zn(2+)</name>
        <dbReference type="ChEBI" id="CHEBI:29105"/>
        <label>1</label>
        <note>catalytic</note>
    </ligand>
</feature>
<feature type="binding site" evidence="1">
    <location>
        <position position="65"/>
    </location>
    <ligand>
        <name>Zn(2+)</name>
        <dbReference type="ChEBI" id="CHEBI:29105"/>
        <label>1</label>
        <note>catalytic</note>
    </ligand>
</feature>
<feature type="binding site" evidence="1">
    <location>
        <position position="94"/>
    </location>
    <ligand>
        <name>Zn(2+)</name>
        <dbReference type="ChEBI" id="CHEBI:29105"/>
        <label>2</label>
    </ligand>
</feature>
<feature type="binding site" evidence="1">
    <location>
        <position position="97"/>
    </location>
    <ligand>
        <name>Zn(2+)</name>
        <dbReference type="ChEBI" id="CHEBI:29105"/>
        <label>2</label>
    </ligand>
</feature>
<feature type="binding site" evidence="1">
    <location>
        <position position="100"/>
    </location>
    <ligand>
        <name>Zn(2+)</name>
        <dbReference type="ChEBI" id="CHEBI:29105"/>
        <label>2</label>
    </ligand>
</feature>
<feature type="binding site" evidence="1">
    <location>
        <position position="108"/>
    </location>
    <ligand>
        <name>Zn(2+)</name>
        <dbReference type="ChEBI" id="CHEBI:29105"/>
        <label>2</label>
    </ligand>
</feature>
<feature type="binding site" evidence="1">
    <location>
        <position position="176"/>
    </location>
    <ligand>
        <name>NAD(+)</name>
        <dbReference type="ChEBI" id="CHEBI:57540"/>
    </ligand>
</feature>
<feature type="binding site" evidence="1">
    <location>
        <position position="196"/>
    </location>
    <ligand>
        <name>NAD(+)</name>
        <dbReference type="ChEBI" id="CHEBI:57540"/>
    </ligand>
</feature>
<feature type="binding site" evidence="1">
    <location>
        <position position="201"/>
    </location>
    <ligand>
        <name>NAD(+)</name>
        <dbReference type="ChEBI" id="CHEBI:57540"/>
    </ligand>
</feature>
<feature type="binding site" evidence="1">
    <location>
        <begin position="263"/>
        <end position="265"/>
    </location>
    <ligand>
        <name>NAD(+)</name>
        <dbReference type="ChEBI" id="CHEBI:57540"/>
    </ligand>
</feature>
<feature type="binding site" evidence="1">
    <location>
        <begin position="287"/>
        <end position="288"/>
    </location>
    <ligand>
        <name>NAD(+)</name>
        <dbReference type="ChEBI" id="CHEBI:57540"/>
    </ligand>
</feature>
<feature type="site" description="Important for catalytic activity for the proton relay mechanism but does not participate directly in the coordination of zinc atom" evidence="1">
    <location>
        <position position="149"/>
    </location>
</feature>
<evidence type="ECO:0000255" key="1">
    <source>
        <dbReference type="HAMAP-Rule" id="MF_00627"/>
    </source>
</evidence>
<name>TDH_PARUW</name>
<proteinExistence type="inferred from homology"/>
<protein>
    <recommendedName>
        <fullName evidence="1">L-threonine 3-dehydrogenase</fullName>
        <shortName evidence="1">TDH</shortName>
        <ecNumber evidence="1">1.1.1.103</ecNumber>
    </recommendedName>
</protein>
<comment type="function">
    <text evidence="1">Catalyzes the NAD(+)-dependent oxidation of L-threonine to 2-amino-3-ketobutyrate.</text>
</comment>
<comment type="catalytic activity">
    <reaction evidence="1">
        <text>L-threonine + NAD(+) = (2S)-2-amino-3-oxobutanoate + NADH + H(+)</text>
        <dbReference type="Rhea" id="RHEA:13161"/>
        <dbReference type="ChEBI" id="CHEBI:15378"/>
        <dbReference type="ChEBI" id="CHEBI:57540"/>
        <dbReference type="ChEBI" id="CHEBI:57926"/>
        <dbReference type="ChEBI" id="CHEBI:57945"/>
        <dbReference type="ChEBI" id="CHEBI:78948"/>
        <dbReference type="EC" id="1.1.1.103"/>
    </reaction>
</comment>
<comment type="cofactor">
    <cofactor evidence="1">
        <name>Zn(2+)</name>
        <dbReference type="ChEBI" id="CHEBI:29105"/>
    </cofactor>
    <text evidence="1">Binds 2 Zn(2+) ions per subunit.</text>
</comment>
<comment type="pathway">
    <text evidence="1">Amino-acid degradation; L-threonine degradation via oxydo-reductase pathway; glycine from L-threonine: step 1/2.</text>
</comment>
<comment type="subunit">
    <text evidence="1">Homotetramer.</text>
</comment>
<comment type="subcellular location">
    <subcellularLocation>
        <location evidence="1">Cytoplasm</location>
    </subcellularLocation>
</comment>
<comment type="similarity">
    <text evidence="1">Belongs to the zinc-containing alcohol dehydrogenase family.</text>
</comment>
<accession>Q6MD15</accession>
<reference key="1">
    <citation type="journal article" date="2004" name="Science">
        <title>Illuminating the evolutionary history of chlamydiae.</title>
        <authorList>
            <person name="Horn M."/>
            <person name="Collingro A."/>
            <person name="Schmitz-Esser S."/>
            <person name="Beier C.L."/>
            <person name="Purkhold U."/>
            <person name="Fartmann B."/>
            <person name="Brandt P."/>
            <person name="Nyakatura G.J."/>
            <person name="Droege M."/>
            <person name="Frishman D."/>
            <person name="Rattei T."/>
            <person name="Mewes H.-W."/>
            <person name="Wagner M."/>
        </authorList>
    </citation>
    <scope>NUCLEOTIDE SEQUENCE [LARGE SCALE GENOMIC DNA]</scope>
    <source>
        <strain>UWE25</strain>
    </source>
</reference>
<keyword id="KW-0963">Cytoplasm</keyword>
<keyword id="KW-0479">Metal-binding</keyword>
<keyword id="KW-0520">NAD</keyword>
<keyword id="KW-0560">Oxidoreductase</keyword>
<keyword id="KW-1185">Reference proteome</keyword>
<keyword id="KW-0862">Zinc</keyword>
<dbReference type="EC" id="1.1.1.103" evidence="1"/>
<dbReference type="EMBL" id="BX908798">
    <property type="protein sequence ID" value="CAF23534.1"/>
    <property type="molecule type" value="Genomic_DNA"/>
</dbReference>
<dbReference type="RefSeq" id="WP_011175360.1">
    <property type="nucleotide sequence ID" value="NC_005861.2"/>
</dbReference>
<dbReference type="SMR" id="Q6MD15"/>
<dbReference type="STRING" id="264201.pc0810"/>
<dbReference type="KEGG" id="pcu:PC_RS03890"/>
<dbReference type="eggNOG" id="COG1063">
    <property type="taxonomic scope" value="Bacteria"/>
</dbReference>
<dbReference type="HOGENOM" id="CLU_026673_11_0_0"/>
<dbReference type="OrthoDB" id="9769198at2"/>
<dbReference type="UniPathway" id="UPA00046">
    <property type="reaction ID" value="UER00505"/>
</dbReference>
<dbReference type="Proteomes" id="UP000000529">
    <property type="component" value="Chromosome"/>
</dbReference>
<dbReference type="GO" id="GO:0005737">
    <property type="term" value="C:cytoplasm"/>
    <property type="evidence" value="ECO:0007669"/>
    <property type="project" value="UniProtKB-SubCell"/>
</dbReference>
<dbReference type="GO" id="GO:0008743">
    <property type="term" value="F:L-threonine 3-dehydrogenase activity"/>
    <property type="evidence" value="ECO:0007669"/>
    <property type="project" value="UniProtKB-UniRule"/>
</dbReference>
<dbReference type="GO" id="GO:0008270">
    <property type="term" value="F:zinc ion binding"/>
    <property type="evidence" value="ECO:0007669"/>
    <property type="project" value="UniProtKB-UniRule"/>
</dbReference>
<dbReference type="GO" id="GO:0019518">
    <property type="term" value="P:L-threonine catabolic process to glycine"/>
    <property type="evidence" value="ECO:0007669"/>
    <property type="project" value="UniProtKB-UniPathway"/>
</dbReference>
<dbReference type="Gene3D" id="3.90.180.10">
    <property type="entry name" value="Medium-chain alcohol dehydrogenases, catalytic domain"/>
    <property type="match status" value="1"/>
</dbReference>
<dbReference type="Gene3D" id="3.40.50.720">
    <property type="entry name" value="NAD(P)-binding Rossmann-like Domain"/>
    <property type="match status" value="1"/>
</dbReference>
<dbReference type="HAMAP" id="MF_00627">
    <property type="entry name" value="Thr_dehydrog"/>
    <property type="match status" value="1"/>
</dbReference>
<dbReference type="InterPro" id="IPR013149">
    <property type="entry name" value="ADH-like_C"/>
</dbReference>
<dbReference type="InterPro" id="IPR013154">
    <property type="entry name" value="ADH-like_N"/>
</dbReference>
<dbReference type="InterPro" id="IPR002328">
    <property type="entry name" value="ADH_Zn_CS"/>
</dbReference>
<dbReference type="InterPro" id="IPR011032">
    <property type="entry name" value="GroES-like_sf"/>
</dbReference>
<dbReference type="InterPro" id="IPR004627">
    <property type="entry name" value="L-Threonine_3-DHase"/>
</dbReference>
<dbReference type="InterPro" id="IPR036291">
    <property type="entry name" value="NAD(P)-bd_dom_sf"/>
</dbReference>
<dbReference type="InterPro" id="IPR050129">
    <property type="entry name" value="Zn_alcohol_dh"/>
</dbReference>
<dbReference type="NCBIfam" id="NF003808">
    <property type="entry name" value="PRK05396.1"/>
    <property type="match status" value="1"/>
</dbReference>
<dbReference type="NCBIfam" id="TIGR00692">
    <property type="entry name" value="tdh"/>
    <property type="match status" value="1"/>
</dbReference>
<dbReference type="PANTHER" id="PTHR43401">
    <property type="entry name" value="L-THREONINE 3-DEHYDROGENASE"/>
    <property type="match status" value="1"/>
</dbReference>
<dbReference type="PANTHER" id="PTHR43401:SF2">
    <property type="entry name" value="L-THREONINE 3-DEHYDROGENASE"/>
    <property type="match status" value="1"/>
</dbReference>
<dbReference type="Pfam" id="PF08240">
    <property type="entry name" value="ADH_N"/>
    <property type="match status" value="1"/>
</dbReference>
<dbReference type="Pfam" id="PF00107">
    <property type="entry name" value="ADH_zinc_N"/>
    <property type="match status" value="1"/>
</dbReference>
<dbReference type="SUPFAM" id="SSF50129">
    <property type="entry name" value="GroES-like"/>
    <property type="match status" value="1"/>
</dbReference>
<dbReference type="SUPFAM" id="SSF51735">
    <property type="entry name" value="NAD(P)-binding Rossmann-fold domains"/>
    <property type="match status" value="1"/>
</dbReference>
<dbReference type="PROSITE" id="PS00059">
    <property type="entry name" value="ADH_ZINC"/>
    <property type="match status" value="1"/>
</dbReference>
<gene>
    <name evidence="1" type="primary">tdh</name>
    <name type="ordered locus">pc0810</name>
</gene>
<organism>
    <name type="scientific">Protochlamydia amoebophila (strain UWE25)</name>
    <dbReference type="NCBI Taxonomy" id="264201"/>
    <lineage>
        <taxon>Bacteria</taxon>
        <taxon>Pseudomonadati</taxon>
        <taxon>Chlamydiota</taxon>
        <taxon>Chlamydiia</taxon>
        <taxon>Parachlamydiales</taxon>
        <taxon>Parachlamydiaceae</taxon>
        <taxon>Candidatus Protochlamydia</taxon>
    </lineage>
</organism>
<sequence>MKGLVKKISAPGLWMENLPIPSHVKDDEVLIKTIKTSICGTDVHIYKWDAWAQKNVPVPLVIGHEFIGEIAEFGKNVKGFKIGERVCGEGHIVCNQCPNCRMGRKHVCMHTKGLGYHISGCFAEYFVLPAENVFSLPPSISDDLGAIFDPYGNAVHTTLAFNLIGEDVLITGAGPIGIMAAAIAKQAGARHIVITDVNDYRLDLARTMGVSHAINVNRESLDNFMQSLGIKYGFTVGLEMSGHPDGLKTLTEKIRHGGNIALLGILPPATSIDWNLVIFKMLTLKGIYGREIFSTWYQMVHLLEIGLNLAPIITHHFSVDNFEKGFEVMLSGQSGKVILDWV</sequence>